<sequence length="1491" mass="167733">MEEPSEPEGLIDWKERCVALEAQLMKFRVQASKIRELLADKMQQLERQVIDAERQAEKAFQEVQVMEEKLKAANIQTSESETRLYKKCQDLESVMQEKDDIIQNLALRLEEQKQVRIQEAKIIEEKAAKIKEWVTVKLNELEVENQNLRFINQTQTEEIRAIQSKLQELQEKKISCVSSPKTSEGQRNLTFGCFLSRAKSPPCVVRCEEVSKMASNEPEITEGRCVEEMEIAEKPADNQVQENSRSQRKLHETSCSSEQNQKTRASFAMDGGTSQNSGVPVSDWSSDEDDGSKGRSKSRCTSTLSSHTSEEGGQCGRLGSEAYLTASDDSSSIFEEETFDGNRPEQKKLCSWQQKAPWKAQGNLAKGRSQSGVKEQDSSSDELNKKFHSQRLDYTSSSSEANTPSPILTPALTPRYPNSLPGKGGAPLVPPPFQPPPKLRVPNVFSISVALTKRHLSQPQLCSDRMFGTNRNAISMIRPLRPQETDLDVVDGDGAEAVNRMDTGCDDGLFSYDSQDPPPCADDQENSEAPKKAPCNKPPTPPLHRFPSWESRIYAVAKSGIRVSEAFNMEHANKNSADILSYSAASLYTSLIYKNMTTPVYTTLKGKATQISSSPFLDDSSGSDEEDSSRSSSRLSESDARSRSGPSSPRAMKRGVSDSSAASESDYAIPPDAYPIDAECSQPEQKLLKTCLASCDNGKNEPLEKSGYLLKMSVRVKTWKRRWFVLKGGELLYYKSPSDVIRKPQGHIELSASCSILRGDNKQTVQLATEKHTYYLTADSPNILEEWIKVLQSVLRVQAANPLCLQPEGKPAVKGLLTKVKHGYSKRVWCMLVGKVLYYFRNQEDKFPLGQLKLWEAKVEEVDRSCDSDEDYETRGCYLLSTHYTIIVHPKDQGPTYLLIGSKHEKEAWLYHLTVAAGSNNINVGSEFEQLVCKLLNIEGEPSSQIWRHPMLCHSKEGILSPLTTLPSEALQTEAIKLFKTCQLFINAAVDSPAIDYHISLAQSALQVCLTHPELQNEICCQLIKQTRRRQLQNQPGPLQGWQLLALCVGLFLPHHPFLWLLQLHLQRNADSRTEFGKYAIYCQRCVERTQQNGDREARPSRMEILSTLLRNPYHHSRPFSIPVHFMNGLYQVVGFDASTTVEEFLNTLNQDTGMRKPAQSGFALFTDDPSGRDLEHCLQGNIKICDIISKWEQASKEQQPGKCEGSRTVRLTYKNRLYFSVQARGETDREKTLLLYQTNDQIINGLFPLNKDLALEMAALLAQVDIGDFERPFSTPAGPVTNQCKANQTLKQVIERFYPKRYREGCSEEQLRQLYQRLSTKWMALRGHSAADCIRIYLTVARKWPFFGAKLFFAKPIAPSSLGNNCVWLAVHENGLSILEYTSMRLVTSYMYKGLMTFGGYQEDFMVVVSTQSKDRPTEKLLFAMAKHKILEITLLIASYINSFHQQKTTFHHLSAPALLSPRTQAPQARVMGSQPPLSNSRPTKGPTLL</sequence>
<name>PKHH2_MOUSE</name>
<evidence type="ECO:0000250" key="1"/>
<evidence type="ECO:0000255" key="2"/>
<evidence type="ECO:0000255" key="3">
    <source>
        <dbReference type="PROSITE-ProRule" id="PRU00084"/>
    </source>
</evidence>
<evidence type="ECO:0000255" key="4">
    <source>
        <dbReference type="PROSITE-ProRule" id="PRU00145"/>
    </source>
</evidence>
<evidence type="ECO:0000255" key="5">
    <source>
        <dbReference type="PROSITE-ProRule" id="PRU00359"/>
    </source>
</evidence>
<evidence type="ECO:0000256" key="6">
    <source>
        <dbReference type="SAM" id="MobiDB-lite"/>
    </source>
</evidence>
<evidence type="ECO:0000269" key="7">
    <source>
    </source>
</evidence>
<evidence type="ECO:0000269" key="8">
    <source>
    </source>
</evidence>
<evidence type="ECO:0000303" key="9">
    <source>
    </source>
</evidence>
<evidence type="ECO:0000303" key="10">
    <source>
    </source>
</evidence>
<evidence type="ECO:0000305" key="11"/>
<keyword id="KW-0025">Alternative splicing</keyword>
<keyword id="KW-1003">Cell membrane</keyword>
<keyword id="KW-0966">Cell projection</keyword>
<keyword id="KW-0175">Coiled coil</keyword>
<keyword id="KW-0963">Cytoplasm</keyword>
<keyword id="KW-0206">Cytoskeleton</keyword>
<keyword id="KW-0472">Membrane</keyword>
<keyword id="KW-1185">Reference proteome</keyword>
<keyword id="KW-0677">Repeat</keyword>
<reference key="1">
    <citation type="journal article" date="2005" name="Science">
        <title>The transcriptional landscape of the mammalian genome.</title>
        <authorList>
            <person name="Carninci P."/>
            <person name="Kasukawa T."/>
            <person name="Katayama S."/>
            <person name="Gough J."/>
            <person name="Frith M.C."/>
            <person name="Maeda N."/>
            <person name="Oyama R."/>
            <person name="Ravasi T."/>
            <person name="Lenhard B."/>
            <person name="Wells C."/>
            <person name="Kodzius R."/>
            <person name="Shimokawa K."/>
            <person name="Bajic V.B."/>
            <person name="Brenner S.E."/>
            <person name="Batalov S."/>
            <person name="Forrest A.R."/>
            <person name="Zavolan M."/>
            <person name="Davis M.J."/>
            <person name="Wilming L.G."/>
            <person name="Aidinis V."/>
            <person name="Allen J.E."/>
            <person name="Ambesi-Impiombato A."/>
            <person name="Apweiler R."/>
            <person name="Aturaliya R.N."/>
            <person name="Bailey T.L."/>
            <person name="Bansal M."/>
            <person name="Baxter L."/>
            <person name="Beisel K.W."/>
            <person name="Bersano T."/>
            <person name="Bono H."/>
            <person name="Chalk A.M."/>
            <person name="Chiu K.P."/>
            <person name="Choudhary V."/>
            <person name="Christoffels A."/>
            <person name="Clutterbuck D.R."/>
            <person name="Crowe M.L."/>
            <person name="Dalla E."/>
            <person name="Dalrymple B.P."/>
            <person name="de Bono B."/>
            <person name="Della Gatta G."/>
            <person name="di Bernardo D."/>
            <person name="Down T."/>
            <person name="Engstrom P."/>
            <person name="Fagiolini M."/>
            <person name="Faulkner G."/>
            <person name="Fletcher C.F."/>
            <person name="Fukushima T."/>
            <person name="Furuno M."/>
            <person name="Futaki S."/>
            <person name="Gariboldi M."/>
            <person name="Georgii-Hemming P."/>
            <person name="Gingeras T.R."/>
            <person name="Gojobori T."/>
            <person name="Green R.E."/>
            <person name="Gustincich S."/>
            <person name="Harbers M."/>
            <person name="Hayashi Y."/>
            <person name="Hensch T.K."/>
            <person name="Hirokawa N."/>
            <person name="Hill D."/>
            <person name="Huminiecki L."/>
            <person name="Iacono M."/>
            <person name="Ikeo K."/>
            <person name="Iwama A."/>
            <person name="Ishikawa T."/>
            <person name="Jakt M."/>
            <person name="Kanapin A."/>
            <person name="Katoh M."/>
            <person name="Kawasawa Y."/>
            <person name="Kelso J."/>
            <person name="Kitamura H."/>
            <person name="Kitano H."/>
            <person name="Kollias G."/>
            <person name="Krishnan S.P."/>
            <person name="Kruger A."/>
            <person name="Kummerfeld S.K."/>
            <person name="Kurochkin I.V."/>
            <person name="Lareau L.F."/>
            <person name="Lazarevic D."/>
            <person name="Lipovich L."/>
            <person name="Liu J."/>
            <person name="Liuni S."/>
            <person name="McWilliam S."/>
            <person name="Madan Babu M."/>
            <person name="Madera M."/>
            <person name="Marchionni L."/>
            <person name="Matsuda H."/>
            <person name="Matsuzawa S."/>
            <person name="Miki H."/>
            <person name="Mignone F."/>
            <person name="Miyake S."/>
            <person name="Morris K."/>
            <person name="Mottagui-Tabar S."/>
            <person name="Mulder N."/>
            <person name="Nakano N."/>
            <person name="Nakauchi H."/>
            <person name="Ng P."/>
            <person name="Nilsson R."/>
            <person name="Nishiguchi S."/>
            <person name="Nishikawa S."/>
            <person name="Nori F."/>
            <person name="Ohara O."/>
            <person name="Okazaki Y."/>
            <person name="Orlando V."/>
            <person name="Pang K.C."/>
            <person name="Pavan W.J."/>
            <person name="Pavesi G."/>
            <person name="Pesole G."/>
            <person name="Petrovsky N."/>
            <person name="Piazza S."/>
            <person name="Reed J."/>
            <person name="Reid J.F."/>
            <person name="Ring B.Z."/>
            <person name="Ringwald M."/>
            <person name="Rost B."/>
            <person name="Ruan Y."/>
            <person name="Salzberg S.L."/>
            <person name="Sandelin A."/>
            <person name="Schneider C."/>
            <person name="Schoenbach C."/>
            <person name="Sekiguchi K."/>
            <person name="Semple C.A."/>
            <person name="Seno S."/>
            <person name="Sessa L."/>
            <person name="Sheng Y."/>
            <person name="Shibata Y."/>
            <person name="Shimada H."/>
            <person name="Shimada K."/>
            <person name="Silva D."/>
            <person name="Sinclair B."/>
            <person name="Sperling S."/>
            <person name="Stupka E."/>
            <person name="Sugiura K."/>
            <person name="Sultana R."/>
            <person name="Takenaka Y."/>
            <person name="Taki K."/>
            <person name="Tammoja K."/>
            <person name="Tan S.L."/>
            <person name="Tang S."/>
            <person name="Taylor M.S."/>
            <person name="Tegner J."/>
            <person name="Teichmann S.A."/>
            <person name="Ueda H.R."/>
            <person name="van Nimwegen E."/>
            <person name="Verardo R."/>
            <person name="Wei C.L."/>
            <person name="Yagi K."/>
            <person name="Yamanishi H."/>
            <person name="Zabarovsky E."/>
            <person name="Zhu S."/>
            <person name="Zimmer A."/>
            <person name="Hide W."/>
            <person name="Bult C."/>
            <person name="Grimmond S.M."/>
            <person name="Teasdale R.D."/>
            <person name="Liu E.T."/>
            <person name="Brusic V."/>
            <person name="Quackenbush J."/>
            <person name="Wahlestedt C."/>
            <person name="Mattick J.S."/>
            <person name="Hume D.A."/>
            <person name="Kai C."/>
            <person name="Sasaki D."/>
            <person name="Tomaru Y."/>
            <person name="Fukuda S."/>
            <person name="Kanamori-Katayama M."/>
            <person name="Suzuki M."/>
            <person name="Aoki J."/>
            <person name="Arakawa T."/>
            <person name="Iida J."/>
            <person name="Imamura K."/>
            <person name="Itoh M."/>
            <person name="Kato T."/>
            <person name="Kawaji H."/>
            <person name="Kawagashira N."/>
            <person name="Kawashima T."/>
            <person name="Kojima M."/>
            <person name="Kondo S."/>
            <person name="Konno H."/>
            <person name="Nakano K."/>
            <person name="Ninomiya N."/>
            <person name="Nishio T."/>
            <person name="Okada M."/>
            <person name="Plessy C."/>
            <person name="Shibata K."/>
            <person name="Shiraki T."/>
            <person name="Suzuki S."/>
            <person name="Tagami M."/>
            <person name="Waki K."/>
            <person name="Watahiki A."/>
            <person name="Okamura-Oho Y."/>
            <person name="Suzuki H."/>
            <person name="Kawai J."/>
            <person name="Hayashizaki Y."/>
        </authorList>
    </citation>
    <scope>NUCLEOTIDE SEQUENCE [LARGE SCALE MRNA] (ISOFORM 1)</scope>
    <source>
        <strain>C57BL/6J</strain>
        <tissue>Head</tissue>
    </source>
</reference>
<reference key="2">
    <citation type="submission" date="2005-07" db="EMBL/GenBank/DDBJ databases">
        <authorList>
            <person name="Mural R.J."/>
            <person name="Adams M.D."/>
            <person name="Myers E.W."/>
            <person name="Smith H.O."/>
            <person name="Venter J.C."/>
        </authorList>
    </citation>
    <scope>NUCLEOTIDE SEQUENCE [LARGE SCALE GENOMIC DNA]</scope>
</reference>
<reference key="3">
    <citation type="journal article" date="2004" name="Genome Res.">
        <title>The status, quality, and expansion of the NIH full-length cDNA project: the Mammalian Gene Collection (MGC).</title>
        <authorList>
            <consortium name="The MGC Project Team"/>
        </authorList>
    </citation>
    <scope>NUCLEOTIDE SEQUENCE [LARGE SCALE MRNA] (ISOFORMS 1 AND 2)</scope>
    <source>
        <strain>FVB/N</strain>
        <tissue>Brain</tissue>
        <tissue>Mammary tumor</tissue>
    </source>
</reference>
<reference key="4">
    <citation type="journal article" date="2004" name="DNA Res.">
        <title>Prediction of the coding sequences of mouse homologues of KIAA gene: IV. The complete nucleotide sequences of 500 mouse KIAA-homologous cDNAs identified by screening of terminal sequences of cDNA clones randomly sampled from size-fractionated libraries.</title>
        <authorList>
            <person name="Okazaki N."/>
            <person name="Kikuno R."/>
            <person name="Ohara R."/>
            <person name="Inamoto S."/>
            <person name="Koseki H."/>
            <person name="Hiraoka S."/>
            <person name="Saga Y."/>
            <person name="Seino S."/>
            <person name="Nishimura M."/>
            <person name="Kaisho T."/>
            <person name="Hoshino K."/>
            <person name="Kitamura H."/>
            <person name="Nagase T."/>
            <person name="Ohara O."/>
            <person name="Koga H."/>
        </authorList>
    </citation>
    <scope>NUCLEOTIDE SEQUENCE [LARGE SCALE MRNA] OF 90-1491 (ISOFORM 3)</scope>
    <source>
        <tissue>Pancreatic islet</tissue>
    </source>
</reference>
<reference key="5">
    <citation type="journal article" date="2007" name="J. Am. Soc. Nephrol.">
        <title>Expression and subcellular distribution of novel glomerulus-associated proteins Dendrin, Ehd3, Sh2d4a, Plekhh2, and 2310066E14Rik.</title>
        <authorList>
            <person name="Patrakka J."/>
            <person name="Xiao Z."/>
            <person name="Nukui M."/>
            <person name="Takemoto M."/>
            <person name="He L."/>
            <person name="Oddsson A."/>
            <person name="Perisic L."/>
            <person name="Kaukinen A."/>
            <person name="Szigyarto C.A.-K."/>
            <person name="Uhlen M."/>
            <person name="Jalanko H."/>
            <person name="Betsholtz C."/>
            <person name="Tryggvason K."/>
        </authorList>
    </citation>
    <scope>SUBCELLULAR LOCATION</scope>
    <scope>TISSUE SPECIFICITY</scope>
</reference>
<reference key="6">
    <citation type="journal article" date="2012" name="Kidney Int.">
        <title>Plekhh2, a novel podocyte protein downregulated in human focal segmental glomerulosclerosis, is involved in matrix adhesion and actin dynamics.</title>
        <authorList>
            <person name="Perisic L."/>
            <person name="Lal M."/>
            <person name="Hulkko J."/>
            <person name="Hultenby K."/>
            <person name="Onfelt B."/>
            <person name="Sun Y."/>
            <person name="Duner F."/>
            <person name="Patrakka J."/>
            <person name="Betsholtz C."/>
            <person name="Uhlen M."/>
            <person name="Brismar H."/>
            <person name="Tryggvason K."/>
            <person name="Wernerson A."/>
            <person name="Pikkarainen T."/>
        </authorList>
    </citation>
    <scope>FUNCTION</scope>
    <scope>SELF-ASSOCIATION</scope>
    <scope>INTERACTION WITH TGFB1I1</scope>
</reference>
<dbReference type="EMBL" id="AK029252">
    <property type="protein sequence ID" value="BAC26356.1"/>
    <property type="molecule type" value="mRNA"/>
</dbReference>
<dbReference type="EMBL" id="CH466537">
    <property type="protein sequence ID" value="EDL38577.1"/>
    <property type="molecule type" value="Genomic_DNA"/>
</dbReference>
<dbReference type="EMBL" id="BC021518">
    <property type="protein sequence ID" value="AAH21518.1"/>
    <property type="status" value="ALT_INIT"/>
    <property type="molecule type" value="mRNA"/>
</dbReference>
<dbReference type="EMBL" id="BC125583">
    <property type="protein sequence ID" value="AAI25584.1"/>
    <property type="molecule type" value="mRNA"/>
</dbReference>
<dbReference type="EMBL" id="BC137804">
    <property type="protein sequence ID" value="AAI37805.1"/>
    <property type="molecule type" value="mRNA"/>
</dbReference>
<dbReference type="EMBL" id="AK173337">
    <property type="protein sequence ID" value="BAD32615.1"/>
    <property type="molecule type" value="Transcribed_RNA"/>
</dbReference>
<dbReference type="CCDS" id="CCDS28999.1">
    <molecule id="Q8C115-1"/>
</dbReference>
<dbReference type="RefSeq" id="NP_001344915.1">
    <molecule id="Q8C115-1"/>
    <property type="nucleotide sequence ID" value="NM_001357986.1"/>
</dbReference>
<dbReference type="RefSeq" id="NP_808274.2">
    <molecule id="Q8C115-1"/>
    <property type="nucleotide sequence ID" value="NM_177606.4"/>
</dbReference>
<dbReference type="RefSeq" id="XP_006524056.1">
    <molecule id="Q8C115-1"/>
    <property type="nucleotide sequence ID" value="XM_006523993.5"/>
</dbReference>
<dbReference type="RefSeq" id="XP_006524057.1">
    <property type="nucleotide sequence ID" value="XM_006523994.3"/>
</dbReference>
<dbReference type="RefSeq" id="XP_017172870.1">
    <molecule id="Q8C115-1"/>
    <property type="nucleotide sequence ID" value="XM_017317381.3"/>
</dbReference>
<dbReference type="SMR" id="Q8C115"/>
<dbReference type="FunCoup" id="Q8C115">
    <property type="interactions" value="1655"/>
</dbReference>
<dbReference type="IntAct" id="Q8C115">
    <property type="interactions" value="2"/>
</dbReference>
<dbReference type="STRING" id="10090.ENSMUSP00000039628"/>
<dbReference type="GlyGen" id="Q8C115">
    <property type="glycosylation" value="3 sites, 1 O-linked glycan (2 sites)"/>
</dbReference>
<dbReference type="iPTMnet" id="Q8C115"/>
<dbReference type="PhosphoSitePlus" id="Q8C115"/>
<dbReference type="jPOST" id="Q8C115"/>
<dbReference type="PaxDb" id="10090-ENSMUSP00000039628"/>
<dbReference type="ProteomicsDB" id="289748">
    <molecule id="Q8C115-1"/>
</dbReference>
<dbReference type="ProteomicsDB" id="289749">
    <molecule id="Q8C115-2"/>
</dbReference>
<dbReference type="ProteomicsDB" id="289750">
    <molecule id="Q8C115-3"/>
</dbReference>
<dbReference type="Pumba" id="Q8C115"/>
<dbReference type="Antibodypedia" id="29827">
    <property type="antibodies" value="82 antibodies from 18 providers"/>
</dbReference>
<dbReference type="DNASU" id="213556"/>
<dbReference type="Ensembl" id="ENSMUST00000047206.7">
    <molecule id="Q8C115-1"/>
    <property type="protein sequence ID" value="ENSMUSP00000039628.6"/>
    <property type="gene ID" value="ENSMUSG00000040852.7"/>
</dbReference>
<dbReference type="GeneID" id="213556"/>
<dbReference type="KEGG" id="mmu:213556"/>
<dbReference type="UCSC" id="uc008dsv.1">
    <molecule id="Q8C115-2"/>
    <property type="organism name" value="mouse"/>
</dbReference>
<dbReference type="UCSC" id="uc008dsw.2">
    <molecule id="Q8C115-1"/>
    <property type="organism name" value="mouse"/>
</dbReference>
<dbReference type="AGR" id="MGI:2146813"/>
<dbReference type="CTD" id="130271"/>
<dbReference type="MGI" id="MGI:2146813">
    <property type="gene designation" value="Plekhh2"/>
</dbReference>
<dbReference type="VEuPathDB" id="HostDB:ENSMUSG00000040852"/>
<dbReference type="eggNOG" id="KOG0248">
    <property type="taxonomic scope" value="Eukaryota"/>
</dbReference>
<dbReference type="GeneTree" id="ENSGT00940000157675"/>
<dbReference type="HOGENOM" id="CLU_001626_3_1_1"/>
<dbReference type="InParanoid" id="Q8C115"/>
<dbReference type="OMA" id="NSMRLII"/>
<dbReference type="OrthoDB" id="6285196at2759"/>
<dbReference type="PhylomeDB" id="Q8C115"/>
<dbReference type="TreeFam" id="TF312866"/>
<dbReference type="BioGRID-ORCS" id="213556">
    <property type="hits" value="5 hits in 76 CRISPR screens"/>
</dbReference>
<dbReference type="ChiTaRS" id="Plekhh2">
    <property type="organism name" value="mouse"/>
</dbReference>
<dbReference type="PRO" id="PR:Q8C115"/>
<dbReference type="Proteomes" id="UP000000589">
    <property type="component" value="Chromosome 17"/>
</dbReference>
<dbReference type="RNAct" id="Q8C115">
    <property type="molecule type" value="protein"/>
</dbReference>
<dbReference type="Bgee" id="ENSMUSG00000040852">
    <property type="expression patterns" value="Expressed in embryonic brain and 126 other cell types or tissues"/>
</dbReference>
<dbReference type="GO" id="GO:0030864">
    <property type="term" value="C:cortical actin cytoskeleton"/>
    <property type="evidence" value="ECO:0000314"/>
    <property type="project" value="UniProtKB"/>
</dbReference>
<dbReference type="GO" id="GO:0005737">
    <property type="term" value="C:cytoplasm"/>
    <property type="evidence" value="ECO:0000250"/>
    <property type="project" value="UniProtKB"/>
</dbReference>
<dbReference type="GO" id="GO:0005829">
    <property type="term" value="C:cytosol"/>
    <property type="evidence" value="ECO:0007669"/>
    <property type="project" value="Ensembl"/>
</dbReference>
<dbReference type="GO" id="GO:0030027">
    <property type="term" value="C:lamellipodium"/>
    <property type="evidence" value="ECO:0000250"/>
    <property type="project" value="UniProtKB"/>
</dbReference>
<dbReference type="GO" id="GO:0016604">
    <property type="term" value="C:nuclear body"/>
    <property type="evidence" value="ECO:0007669"/>
    <property type="project" value="Ensembl"/>
</dbReference>
<dbReference type="GO" id="GO:0005886">
    <property type="term" value="C:plasma membrane"/>
    <property type="evidence" value="ECO:0000250"/>
    <property type="project" value="UniProtKB"/>
</dbReference>
<dbReference type="GO" id="GO:0003779">
    <property type="term" value="F:actin binding"/>
    <property type="evidence" value="ECO:0000314"/>
    <property type="project" value="UniProtKB"/>
</dbReference>
<dbReference type="GO" id="GO:0030835">
    <property type="term" value="P:negative regulation of actin filament depolymerization"/>
    <property type="evidence" value="ECO:0000314"/>
    <property type="project" value="UniProtKB"/>
</dbReference>
<dbReference type="CDD" id="cd14473">
    <property type="entry name" value="FERM_B-lobe"/>
    <property type="match status" value="1"/>
</dbReference>
<dbReference type="CDD" id="cd13206">
    <property type="entry name" value="FERM_C-lobe_PLEKHH1_PLEKHH2"/>
    <property type="match status" value="1"/>
</dbReference>
<dbReference type="CDD" id="cd17179">
    <property type="entry name" value="FERM_F1_PLEKHH2"/>
    <property type="match status" value="1"/>
</dbReference>
<dbReference type="CDD" id="cd13282">
    <property type="entry name" value="PH1_PLEKHH1_PLEKHH2"/>
    <property type="match status" value="1"/>
</dbReference>
<dbReference type="FunFam" id="1.25.40.530:FF:000001">
    <property type="entry name" value="Pleckstrin homology domain-containing family H member 2"/>
    <property type="match status" value="1"/>
</dbReference>
<dbReference type="FunFam" id="2.30.29.30:FF:000335">
    <property type="entry name" value="Pleckstrin homology domain-containing family H member 2"/>
    <property type="match status" value="1"/>
</dbReference>
<dbReference type="FunFam" id="1.20.80.10:FF:000021">
    <property type="entry name" value="pleckstrin homology domain-containing family H member 2"/>
    <property type="match status" value="1"/>
</dbReference>
<dbReference type="FunFam" id="3.10.20.90:FF:000125">
    <property type="entry name" value="pleckstrin homology domain-containing family H member 2"/>
    <property type="match status" value="1"/>
</dbReference>
<dbReference type="FunFam" id="2.30.29.30:FF:000295">
    <property type="entry name" value="pleckstrin homology domain-containing family H member 2 isoform X1"/>
    <property type="match status" value="1"/>
</dbReference>
<dbReference type="Gene3D" id="1.20.80.10">
    <property type="match status" value="1"/>
</dbReference>
<dbReference type="Gene3D" id="1.25.40.530">
    <property type="entry name" value="MyTH4 domain"/>
    <property type="match status" value="1"/>
</dbReference>
<dbReference type="Gene3D" id="3.10.20.90">
    <property type="entry name" value="Phosphatidylinositol 3-kinase Catalytic Subunit, Chain A, domain 1"/>
    <property type="match status" value="1"/>
</dbReference>
<dbReference type="Gene3D" id="2.30.29.30">
    <property type="entry name" value="Pleckstrin-homology domain (PH domain)/Phosphotyrosine-binding domain (PTB)"/>
    <property type="match status" value="3"/>
</dbReference>
<dbReference type="InterPro" id="IPR019749">
    <property type="entry name" value="Band_41_domain"/>
</dbReference>
<dbReference type="InterPro" id="IPR014352">
    <property type="entry name" value="FERM/acyl-CoA-bd_prot_sf"/>
</dbReference>
<dbReference type="InterPro" id="IPR035963">
    <property type="entry name" value="FERM_2"/>
</dbReference>
<dbReference type="InterPro" id="IPR019748">
    <property type="entry name" value="FERM_central"/>
</dbReference>
<dbReference type="InterPro" id="IPR000299">
    <property type="entry name" value="FERM_domain"/>
</dbReference>
<dbReference type="InterPro" id="IPR000857">
    <property type="entry name" value="MyTH4_dom"/>
</dbReference>
<dbReference type="InterPro" id="IPR038185">
    <property type="entry name" value="MyTH4_dom_sf"/>
</dbReference>
<dbReference type="InterPro" id="IPR011993">
    <property type="entry name" value="PH-like_dom_sf"/>
</dbReference>
<dbReference type="InterPro" id="IPR001849">
    <property type="entry name" value="PH_domain"/>
</dbReference>
<dbReference type="PANTHER" id="PTHR22903:SF3">
    <property type="entry name" value="PLECKSTRIN HOMOLOGY DOMAIN-CONTAINING FAMILY H MEMBER 2"/>
    <property type="match status" value="1"/>
</dbReference>
<dbReference type="PANTHER" id="PTHR22903">
    <property type="entry name" value="PLEKHH PROTEIN"/>
    <property type="match status" value="1"/>
</dbReference>
<dbReference type="Pfam" id="PF00373">
    <property type="entry name" value="FERM_M"/>
    <property type="match status" value="1"/>
</dbReference>
<dbReference type="Pfam" id="PF00784">
    <property type="entry name" value="MyTH4"/>
    <property type="match status" value="1"/>
</dbReference>
<dbReference type="Pfam" id="PF00169">
    <property type="entry name" value="PH"/>
    <property type="match status" value="1"/>
</dbReference>
<dbReference type="Pfam" id="PF21989">
    <property type="entry name" value="RA_2"/>
    <property type="match status" value="1"/>
</dbReference>
<dbReference type="SMART" id="SM00295">
    <property type="entry name" value="B41"/>
    <property type="match status" value="1"/>
</dbReference>
<dbReference type="SMART" id="SM00139">
    <property type="entry name" value="MyTH4"/>
    <property type="match status" value="1"/>
</dbReference>
<dbReference type="SMART" id="SM00233">
    <property type="entry name" value="PH"/>
    <property type="match status" value="2"/>
</dbReference>
<dbReference type="SUPFAM" id="SSF50729">
    <property type="entry name" value="PH domain-like"/>
    <property type="match status" value="2"/>
</dbReference>
<dbReference type="SUPFAM" id="SSF47031">
    <property type="entry name" value="Second domain of FERM"/>
    <property type="match status" value="1"/>
</dbReference>
<dbReference type="PROSITE" id="PS50057">
    <property type="entry name" value="FERM_3"/>
    <property type="match status" value="1"/>
</dbReference>
<dbReference type="PROSITE" id="PS51016">
    <property type="entry name" value="MYTH4"/>
    <property type="match status" value="1"/>
</dbReference>
<dbReference type="PROSITE" id="PS50003">
    <property type="entry name" value="PH_DOMAIN"/>
    <property type="match status" value="2"/>
</dbReference>
<comment type="function">
    <text evidence="8">In the kidney glomerulus may play a role in linking podocyte foot processes to the glomerular basement membrane. May be involved in stabilization of F-actin by attenuating its depolymerization. Can recruit TGFB1I1 from focal adhesions to podocyte lamellipodia.</text>
</comment>
<comment type="subunit">
    <text evidence="8">Self-associates. Interacts with TGFB1I1.</text>
</comment>
<comment type="interaction">
    <interactant intactId="EBI-6512409">
        <id>Q8C115</id>
    </interactant>
    <interactant intactId="EBI-642844">
        <id>Q62219</id>
        <label>Tgfb1i1</label>
    </interactant>
    <organismsDiffer>false</organismsDiffer>
    <experiments>3</experiments>
</comment>
<comment type="subcellular location">
    <subcellularLocation>
        <location evidence="1">Cytoplasm</location>
    </subcellularLocation>
    <subcellularLocation>
        <location evidence="7">Cytoplasm</location>
        <location evidence="7">Cytoskeleton</location>
    </subcellularLocation>
    <subcellularLocation>
        <location evidence="1">Cell membrane</location>
        <topology evidence="1">Peripheral membrane protein</topology>
        <orientation evidence="1">Cytoplasmic side</orientation>
    </subcellularLocation>
    <subcellularLocation>
        <location evidence="1">Cell projection</location>
        <location evidence="1">Lamellipodium</location>
    </subcellularLocation>
    <text evidence="1">Localizes to the slit diaphragm and foot process of podocytes. Localization to peripheral regions of lamellipodia seems to be dependent on PI3K (By similarity).</text>
</comment>
<comment type="alternative products">
    <event type="alternative splicing"/>
    <isoform>
        <id>Q8C115-1</id>
        <name>1</name>
        <sequence type="displayed"/>
    </isoform>
    <isoform>
        <id>Q8C115-2</id>
        <name>2</name>
        <sequence type="described" ref="VSP_028576 VSP_028577"/>
    </isoform>
    <isoform>
        <id>Q8C115-3</id>
        <name>3</name>
        <sequence type="described" ref="VSP_028578"/>
    </isoform>
</comment>
<comment type="tissue specificity">
    <text evidence="7">Expressed in the kidney and testis. Expressed in the kidney exclusively by glomerular podocytes.</text>
</comment>
<comment type="sequence caution" evidence="11">
    <conflict type="erroneous initiation">
        <sequence resource="EMBL-CDS" id="AAH21518"/>
    </conflict>
    <text>Extended N-terminus.</text>
</comment>
<feature type="chain" id="PRO_0000307122" description="Pleckstrin homology domain-containing family H member 2">
    <location>
        <begin position="1"/>
        <end position="1491"/>
    </location>
</feature>
<feature type="domain" description="PH 1" evidence="4">
    <location>
        <begin position="702"/>
        <end position="796"/>
    </location>
</feature>
<feature type="domain" description="PH 2" evidence="4">
    <location>
        <begin position="810"/>
        <end position="918"/>
    </location>
</feature>
<feature type="domain" description="MyTH4" evidence="5">
    <location>
        <begin position="954"/>
        <end position="1109"/>
    </location>
</feature>
<feature type="domain" description="FERM" evidence="3">
    <location>
        <begin position="1120"/>
        <end position="1449"/>
    </location>
</feature>
<feature type="region of interest" description="Disordered" evidence="6">
    <location>
        <begin position="232"/>
        <end position="435"/>
    </location>
</feature>
<feature type="region of interest" description="Disordered" evidence="6">
    <location>
        <begin position="506"/>
        <end position="546"/>
    </location>
</feature>
<feature type="region of interest" description="Disordered" evidence="6">
    <location>
        <begin position="612"/>
        <end position="668"/>
    </location>
</feature>
<feature type="region of interest" description="Disordered" evidence="6">
    <location>
        <begin position="1466"/>
        <end position="1491"/>
    </location>
</feature>
<feature type="coiled-coil region" evidence="2">
    <location>
        <begin position="19"/>
        <end position="177"/>
    </location>
</feature>
<feature type="compositionally biased region" description="Polar residues" evidence="6">
    <location>
        <begin position="253"/>
        <end position="264"/>
    </location>
</feature>
<feature type="compositionally biased region" description="Basic and acidic residues" evidence="6">
    <location>
        <begin position="374"/>
        <end position="385"/>
    </location>
</feature>
<feature type="compositionally biased region" description="Polar residues" evidence="6">
    <location>
        <begin position="392"/>
        <end position="406"/>
    </location>
</feature>
<feature type="compositionally biased region" description="Low complexity" evidence="6">
    <location>
        <begin position="657"/>
        <end position="666"/>
    </location>
</feature>
<feature type="splice variant" id="VSP_028576" description="In isoform 2." evidence="10">
    <original>KATQISSSPFLDDSSGSDEEDSSRSSSRLSESDA</original>
    <variation>VMSAFLVVRPMVFSRIVRDSTLGILTSIPLFVEL</variation>
    <location>
        <begin position="607"/>
        <end position="640"/>
    </location>
</feature>
<feature type="splice variant" id="VSP_028577" description="In isoform 2." evidence="10">
    <location>
        <begin position="641"/>
        <end position="1491"/>
    </location>
</feature>
<feature type="splice variant" id="VSP_028578" description="In isoform 3." evidence="9">
    <location>
        <begin position="702"/>
        <end position="711"/>
    </location>
</feature>
<feature type="sequence conflict" description="In Ref. 1; BAC26356." evidence="11" ref="1">
    <original>K</original>
    <variation>E</variation>
    <location>
        <position position="531"/>
    </location>
</feature>
<feature type="sequence conflict" description="In Ref. 4; BAD32615." evidence="11" ref="4">
    <original>A</original>
    <variation>V</variation>
    <location>
        <position position="917"/>
    </location>
</feature>
<feature type="sequence conflict" description="In Ref. 1; BAC26356." evidence="11" ref="1">
    <original>S</original>
    <variation>C</variation>
    <location>
        <position position="1456"/>
    </location>
</feature>
<protein>
    <recommendedName>
        <fullName>Pleckstrin homology domain-containing family H member 2</fullName>
    </recommendedName>
</protein>
<proteinExistence type="evidence at protein level"/>
<accession>Q8C115</accession>
<accession>B2RQ85</accession>
<accession>Q059P2</accession>
<accession>Q69Z29</accession>
<accession>Q8VDL8</accession>
<gene>
    <name type="primary">Plekhh2</name>
    <name type="synonym">Kiaa2028</name>
</gene>
<organism>
    <name type="scientific">Mus musculus</name>
    <name type="common">Mouse</name>
    <dbReference type="NCBI Taxonomy" id="10090"/>
    <lineage>
        <taxon>Eukaryota</taxon>
        <taxon>Metazoa</taxon>
        <taxon>Chordata</taxon>
        <taxon>Craniata</taxon>
        <taxon>Vertebrata</taxon>
        <taxon>Euteleostomi</taxon>
        <taxon>Mammalia</taxon>
        <taxon>Eutheria</taxon>
        <taxon>Euarchontoglires</taxon>
        <taxon>Glires</taxon>
        <taxon>Rodentia</taxon>
        <taxon>Myomorpha</taxon>
        <taxon>Muroidea</taxon>
        <taxon>Muridae</taxon>
        <taxon>Murinae</taxon>
        <taxon>Mus</taxon>
        <taxon>Mus</taxon>
    </lineage>
</organism>